<gene>
    <name type="primary">MT-ND4L</name>
    <name type="synonym">MTND4L</name>
    <name type="synonym">NADH4L</name>
    <name type="synonym">ND4L</name>
</gene>
<feature type="chain" id="PRO_0000274982" description="NADH-ubiquinone oxidoreductase chain 4L">
    <location>
        <begin position="1"/>
        <end position="98"/>
    </location>
</feature>
<feature type="transmembrane region" description="Helical" evidence="3">
    <location>
        <begin position="2"/>
        <end position="22"/>
    </location>
</feature>
<feature type="transmembrane region" description="Helical" evidence="3">
    <location>
        <begin position="30"/>
        <end position="50"/>
    </location>
</feature>
<feature type="transmembrane region" description="Helical" evidence="3">
    <location>
        <begin position="61"/>
        <end position="81"/>
    </location>
</feature>
<name>NU4LM_BRATR</name>
<geneLocation type="mitochondrion"/>
<keyword id="KW-0249">Electron transport</keyword>
<keyword id="KW-0472">Membrane</keyword>
<keyword id="KW-0496">Mitochondrion</keyword>
<keyword id="KW-0999">Mitochondrion inner membrane</keyword>
<keyword id="KW-0520">NAD</keyword>
<keyword id="KW-0679">Respiratory chain</keyword>
<keyword id="KW-1278">Translocase</keyword>
<keyword id="KW-0812">Transmembrane</keyword>
<keyword id="KW-1133">Transmembrane helix</keyword>
<keyword id="KW-0813">Transport</keyword>
<keyword id="KW-0830">Ubiquinone</keyword>
<reference key="1">
    <citation type="submission" date="2005-03" db="EMBL/GenBank/DDBJ databases">
        <authorList>
            <person name="McLenachan P."/>
            <person name="Penny D."/>
        </authorList>
    </citation>
    <scope>NUCLEOTIDE SEQUENCE [GENOMIC DNA]</scope>
</reference>
<comment type="function">
    <text evidence="1">Core subunit of the mitochondrial membrane respiratory chain NADH dehydrogenase (Complex I) which catalyzes electron transfer from NADH through the respiratory chain, using ubiquinone as an electron acceptor. Part of the enzyme membrane arm which is embedded in the lipid bilayer and involved in proton translocation.</text>
</comment>
<comment type="catalytic activity">
    <reaction evidence="1">
        <text>a ubiquinone + NADH + 5 H(+)(in) = a ubiquinol + NAD(+) + 4 H(+)(out)</text>
        <dbReference type="Rhea" id="RHEA:29091"/>
        <dbReference type="Rhea" id="RHEA-COMP:9565"/>
        <dbReference type="Rhea" id="RHEA-COMP:9566"/>
        <dbReference type="ChEBI" id="CHEBI:15378"/>
        <dbReference type="ChEBI" id="CHEBI:16389"/>
        <dbReference type="ChEBI" id="CHEBI:17976"/>
        <dbReference type="ChEBI" id="CHEBI:57540"/>
        <dbReference type="ChEBI" id="CHEBI:57945"/>
        <dbReference type="EC" id="7.1.1.2"/>
    </reaction>
    <physiologicalReaction direction="left-to-right" evidence="1">
        <dbReference type="Rhea" id="RHEA:29092"/>
    </physiologicalReaction>
</comment>
<comment type="subunit">
    <text evidence="2">Core subunit of respiratory chain NADH dehydrogenase (Complex I) which is composed of 45 different subunits.</text>
</comment>
<comment type="subcellular location">
    <subcellularLocation>
        <location evidence="2">Mitochondrion inner membrane</location>
        <topology evidence="3">Multi-pass membrane protein</topology>
    </subcellularLocation>
</comment>
<comment type="similarity">
    <text evidence="4">Belongs to the complex I subunit 4L family.</text>
</comment>
<proteinExistence type="inferred from homology"/>
<dbReference type="EC" id="7.1.1.2"/>
<dbReference type="EMBL" id="AY960979">
    <property type="protein sequence ID" value="AAX50164.1"/>
    <property type="molecule type" value="Genomic_DNA"/>
</dbReference>
<dbReference type="SMR" id="Q58F86"/>
<dbReference type="GO" id="GO:0005743">
    <property type="term" value="C:mitochondrial inner membrane"/>
    <property type="evidence" value="ECO:0000250"/>
    <property type="project" value="UniProtKB"/>
</dbReference>
<dbReference type="GO" id="GO:0045271">
    <property type="term" value="C:respiratory chain complex I"/>
    <property type="evidence" value="ECO:0000250"/>
    <property type="project" value="UniProtKB"/>
</dbReference>
<dbReference type="GO" id="GO:0008137">
    <property type="term" value="F:NADH dehydrogenase (ubiquinone) activity"/>
    <property type="evidence" value="ECO:0000250"/>
    <property type="project" value="UniProtKB"/>
</dbReference>
<dbReference type="GO" id="GO:0042773">
    <property type="term" value="P:ATP synthesis coupled electron transport"/>
    <property type="evidence" value="ECO:0007669"/>
    <property type="project" value="InterPro"/>
</dbReference>
<dbReference type="FunFam" id="1.10.287.3510:FF:000002">
    <property type="entry name" value="NADH-ubiquinone oxidoreductase chain 4L"/>
    <property type="match status" value="1"/>
</dbReference>
<dbReference type="Gene3D" id="1.10.287.3510">
    <property type="match status" value="1"/>
</dbReference>
<dbReference type="InterPro" id="IPR001133">
    <property type="entry name" value="NADH_UbQ_OxRdtase_chain4L/K"/>
</dbReference>
<dbReference type="InterPro" id="IPR039428">
    <property type="entry name" value="NUOK/Mnh_C1-like"/>
</dbReference>
<dbReference type="PANTHER" id="PTHR11434:SF0">
    <property type="entry name" value="NADH-UBIQUINONE OXIDOREDUCTASE CHAIN 4L"/>
    <property type="match status" value="1"/>
</dbReference>
<dbReference type="PANTHER" id="PTHR11434">
    <property type="entry name" value="NADH-UBIQUINONE OXIDOREDUCTASE SUBUNIT ND4L"/>
    <property type="match status" value="1"/>
</dbReference>
<dbReference type="Pfam" id="PF00420">
    <property type="entry name" value="Oxidored_q2"/>
    <property type="match status" value="1"/>
</dbReference>
<sequence>MPFIYINILLALTTALLGLLLFRSHMMSSLLCLEGLMLSLFIMSALTTLGTHHTLSITMPIILMVFAACETALGLALLVTISNIYGSDYVQNLNLLQC</sequence>
<evidence type="ECO:0000250" key="1">
    <source>
        <dbReference type="UniProtKB" id="P03901"/>
    </source>
</evidence>
<evidence type="ECO:0000250" key="2">
    <source>
        <dbReference type="UniProtKB" id="P03902"/>
    </source>
</evidence>
<evidence type="ECO:0000255" key="3"/>
<evidence type="ECO:0000305" key="4"/>
<protein>
    <recommendedName>
        <fullName>NADH-ubiquinone oxidoreductase chain 4L</fullName>
        <ecNumber>7.1.1.2</ecNumber>
    </recommendedName>
    <alternativeName>
        <fullName>NADH dehydrogenase subunit 4L</fullName>
    </alternativeName>
</protein>
<accession>Q58F86</accession>
<organism>
    <name type="scientific">Bradypus tridactylus</name>
    <name type="common">Pale-throated three-toed sloth</name>
    <dbReference type="NCBI Taxonomy" id="9354"/>
    <lineage>
        <taxon>Eukaryota</taxon>
        <taxon>Metazoa</taxon>
        <taxon>Chordata</taxon>
        <taxon>Craniata</taxon>
        <taxon>Vertebrata</taxon>
        <taxon>Euteleostomi</taxon>
        <taxon>Mammalia</taxon>
        <taxon>Eutheria</taxon>
        <taxon>Xenarthra</taxon>
        <taxon>Pilosa</taxon>
        <taxon>Folivora</taxon>
        <taxon>Bradypodidae</taxon>
        <taxon>Bradypus</taxon>
    </lineage>
</organism>